<sequence>MNTKLTKIISGLFVATAAFQTASAGNITDIKVSSLPNKQKIVKVSFDKEIVNPTGFVTSSPARIALDFEQTGISMDQQVLEYADPLLSKISAAQNSSRARLVLNLNKPGQYNTEVRGNKVWIFINESDDTVSAPARPAVKAAPAAPAKQQAAAPSTKSAVSVSKPFTPAKQQAAAPFTESVVSVSAPFSPAKQQAAASAKQQTAAPAKQQAATPAKQTNIDFRKDGKNAGIIELAALGFAGQPDISQQHDHIIVTLKNHTLPTTLQRSLDVADFKTPVQKVTLKRLNNDTQLIITTAGNWELVNKSAAPGYFTFQVLPKKQNLESGGVNNAPKTFTGRKISLDFQDVEIRTILQILAKESGMNIVASDSVNGKMTLSLKDVPWDQALDLVMQARNLDMRQQGNIVNIAPRDELLAKDKAFLQAEKDIADLGALYSQNFQLKYKNVEEFRSILRLDNADTTGNRNTLVSGRGSVLIDPATNTLIVTDTRSVIEKFRKLIDELDVPAQQVMIEARIVEAADGFSRDLGVKFGATGKKKLKNDTSAFGWGVNSGFGGDDKWGAETKINLPITAAANSISLVRAISSGALNLELSASESLSKTKTLANPRVLTQNRKEAKIESGYEIPFTVTSIANGGSSTNTELKKAVLGLTVTPNITPDGQIIMTVKINKDSPAQCASGNQTILCISTKNLNTQAMVENGGTLIVGGIYEEDNGNTLTKVPLLGDIPVIGNLFKTRGKKTDRRELLIFITPRIMGTAGNSLRY</sequence>
<accession>Q9JVW4</accession>
<accession>A1IQ85</accession>
<reference key="1">
    <citation type="journal article" date="2000" name="Nature">
        <title>Complete DNA sequence of a serogroup A strain of Neisseria meningitidis Z2491.</title>
        <authorList>
            <person name="Parkhill J."/>
            <person name="Achtman M."/>
            <person name="James K.D."/>
            <person name="Bentley S.D."/>
            <person name="Churcher C.M."/>
            <person name="Klee S.R."/>
            <person name="Morelli G."/>
            <person name="Basham D."/>
            <person name="Brown D."/>
            <person name="Chillingworth T."/>
            <person name="Davies R.M."/>
            <person name="Davis P."/>
            <person name="Devlin K."/>
            <person name="Feltwell T."/>
            <person name="Hamlin N."/>
            <person name="Holroyd S."/>
            <person name="Jagels K."/>
            <person name="Leather S."/>
            <person name="Moule S."/>
            <person name="Mungall K.L."/>
            <person name="Quail M.A."/>
            <person name="Rajandream M.A."/>
            <person name="Rutherford K.M."/>
            <person name="Simmonds M."/>
            <person name="Skelton J."/>
            <person name="Whitehead S."/>
            <person name="Spratt B.G."/>
            <person name="Barrell B.G."/>
        </authorList>
    </citation>
    <scope>NUCLEOTIDE SEQUENCE [LARGE SCALE GENOMIC DNA]</scope>
    <source>
        <strain>DSM 15465 / Z2491</strain>
    </source>
</reference>
<dbReference type="EMBL" id="AL157959">
    <property type="protein sequence ID" value="CAM07913.1"/>
    <property type="molecule type" value="Genomic_DNA"/>
</dbReference>
<dbReference type="PIR" id="A81985">
    <property type="entry name" value="A81985"/>
</dbReference>
<dbReference type="RefSeq" id="WP_002219789.1">
    <property type="nucleotide sequence ID" value="NC_003116.1"/>
</dbReference>
<dbReference type="PDB" id="4AR0">
    <property type="method" value="NMR"/>
    <property type="chains" value="A=335-434"/>
</dbReference>
<dbReference type="PDBsum" id="4AR0"/>
<dbReference type="SMR" id="Q9JVW4"/>
<dbReference type="EnsemblBacteria" id="CAM07913">
    <property type="protein sequence ID" value="CAM07913"/>
    <property type="gene ID" value="NMA0650"/>
</dbReference>
<dbReference type="KEGG" id="nma:NMA0650"/>
<dbReference type="HOGENOM" id="CLU_006756_0_1_4"/>
<dbReference type="EvolutionaryTrace" id="Q9JVW4"/>
<dbReference type="Proteomes" id="UP000000626">
    <property type="component" value="Chromosome"/>
</dbReference>
<dbReference type="GO" id="GO:0009279">
    <property type="term" value="C:cell outer membrane"/>
    <property type="evidence" value="ECO:0007669"/>
    <property type="project" value="UniProtKB-SubCell"/>
</dbReference>
<dbReference type="GO" id="GO:0030420">
    <property type="term" value="P:establishment of competence for transformation"/>
    <property type="evidence" value="ECO:0007669"/>
    <property type="project" value="UniProtKB-KW"/>
</dbReference>
<dbReference type="GO" id="GO:0009306">
    <property type="term" value="P:protein secretion"/>
    <property type="evidence" value="ECO:0007669"/>
    <property type="project" value="InterPro"/>
</dbReference>
<dbReference type="Gene3D" id="2.60.40.3470">
    <property type="match status" value="1"/>
</dbReference>
<dbReference type="Gene3D" id="2.60.40.3500">
    <property type="match status" value="1"/>
</dbReference>
<dbReference type="Gene3D" id="3.30.1370.120">
    <property type="match status" value="1"/>
</dbReference>
<dbReference type="Gene3D" id="3.30.1370.130">
    <property type="match status" value="1"/>
</dbReference>
<dbReference type="InterPro" id="IPR021731">
    <property type="entry name" value="AMIN_dom"/>
</dbReference>
<dbReference type="InterPro" id="IPR001775">
    <property type="entry name" value="GspD/PilQ"/>
</dbReference>
<dbReference type="InterPro" id="IPR005644">
    <property type="entry name" value="NolW-like"/>
</dbReference>
<dbReference type="InterPro" id="IPR038591">
    <property type="entry name" value="NolW-like_sf"/>
</dbReference>
<dbReference type="InterPro" id="IPR013355">
    <property type="entry name" value="Pilus_4_PilQ"/>
</dbReference>
<dbReference type="InterPro" id="IPR011662">
    <property type="entry name" value="Secretin/TonB_short_N"/>
</dbReference>
<dbReference type="InterPro" id="IPR004846">
    <property type="entry name" value="T2SS/T3SS_dom"/>
</dbReference>
<dbReference type="InterPro" id="IPR004845">
    <property type="entry name" value="T2SS_GspD_CS"/>
</dbReference>
<dbReference type="InterPro" id="IPR051808">
    <property type="entry name" value="Type_IV_pilus_biogenesis"/>
</dbReference>
<dbReference type="NCBIfam" id="TIGR02515">
    <property type="entry name" value="IV_pilus_PilQ"/>
    <property type="match status" value="1"/>
</dbReference>
<dbReference type="PANTHER" id="PTHR30604:SF1">
    <property type="entry name" value="DNA UTILIZATION PROTEIN HOFQ"/>
    <property type="match status" value="1"/>
</dbReference>
<dbReference type="PANTHER" id="PTHR30604">
    <property type="entry name" value="PROTEIN TRANSPORT PROTEIN HOFQ"/>
    <property type="match status" value="1"/>
</dbReference>
<dbReference type="Pfam" id="PF11741">
    <property type="entry name" value="AMIN"/>
    <property type="match status" value="2"/>
</dbReference>
<dbReference type="Pfam" id="PF00263">
    <property type="entry name" value="Secretin"/>
    <property type="match status" value="1"/>
</dbReference>
<dbReference type="Pfam" id="PF03958">
    <property type="entry name" value="Secretin_N"/>
    <property type="match status" value="1"/>
</dbReference>
<dbReference type="Pfam" id="PF07660">
    <property type="entry name" value="STN"/>
    <property type="match status" value="1"/>
</dbReference>
<dbReference type="PRINTS" id="PR00811">
    <property type="entry name" value="BCTERIALGSPD"/>
</dbReference>
<dbReference type="SMART" id="SM00965">
    <property type="entry name" value="STN"/>
    <property type="match status" value="1"/>
</dbReference>
<dbReference type="PROSITE" id="PS00875">
    <property type="entry name" value="T2SP_D"/>
    <property type="match status" value="1"/>
</dbReference>
<gene>
    <name type="primary">pilQ</name>
    <name type="ordered locus">NMA0650</name>
</gene>
<proteinExistence type="evidence at protein level"/>
<evidence type="ECO:0000250" key="1"/>
<evidence type="ECO:0000255" key="2"/>
<evidence type="ECO:0000256" key="3">
    <source>
        <dbReference type="SAM" id="MobiDB-lite"/>
    </source>
</evidence>
<evidence type="ECO:0000305" key="4"/>
<evidence type="ECO:0007829" key="5">
    <source>
        <dbReference type="PDB" id="4AR0"/>
    </source>
</evidence>
<organism>
    <name type="scientific">Neisseria meningitidis serogroup A / serotype 4A (strain DSM 15465 / Z2491)</name>
    <dbReference type="NCBI Taxonomy" id="122587"/>
    <lineage>
        <taxon>Bacteria</taxon>
        <taxon>Pseudomonadati</taxon>
        <taxon>Pseudomonadota</taxon>
        <taxon>Betaproteobacteria</taxon>
        <taxon>Neisseriales</taxon>
        <taxon>Neisseriaceae</taxon>
        <taxon>Neisseria</taxon>
    </lineage>
</organism>
<protein>
    <recommendedName>
        <fullName>Type IV pilus biogenesis and competence protein PilQ</fullName>
    </recommendedName>
</protein>
<name>PILQ_NEIMA</name>
<comment type="function">
    <text evidence="1">Required for type IV pilus biogenesis and competence. Could function as a pore for exit of the pilus but also as a channel for entry of heme and antimicrobial agents and uptake of transforming DNA (By similarity).</text>
</comment>
<comment type="subunit">
    <text evidence="1">Homododecamer. Tetramer of trimer (By similarity).</text>
</comment>
<comment type="subcellular location">
    <subcellularLocation>
        <location evidence="1">Cell outer membrane</location>
        <topology evidence="1">Peripheral membrane protein</topology>
    </subcellularLocation>
</comment>
<comment type="similarity">
    <text evidence="4">Belongs to the bacterial secretin family. PilQ subfamily.</text>
</comment>
<feature type="signal peptide" evidence="2">
    <location>
        <begin position="1"/>
        <end position="24"/>
    </location>
</feature>
<feature type="chain" id="PRO_0000013116" description="Type IV pilus biogenesis and competence protein PilQ">
    <location>
        <begin position="25"/>
        <end position="761"/>
    </location>
</feature>
<feature type="region of interest" description="Disordered" evidence="3">
    <location>
        <begin position="135"/>
        <end position="157"/>
    </location>
</feature>
<feature type="region of interest" description="Disordered" evidence="3">
    <location>
        <begin position="193"/>
        <end position="221"/>
    </location>
</feature>
<feature type="compositionally biased region" description="Low complexity" evidence="3">
    <location>
        <begin position="135"/>
        <end position="154"/>
    </location>
</feature>
<feature type="compositionally biased region" description="Low complexity" evidence="3">
    <location>
        <begin position="193"/>
        <end position="218"/>
    </location>
</feature>
<feature type="strand" evidence="5">
    <location>
        <begin position="339"/>
        <end position="348"/>
    </location>
</feature>
<feature type="helix" evidence="5">
    <location>
        <begin position="349"/>
        <end position="358"/>
    </location>
</feature>
<feature type="strand" evidence="5">
    <location>
        <begin position="363"/>
        <end position="366"/>
    </location>
</feature>
<feature type="strand" evidence="5">
    <location>
        <begin position="373"/>
        <end position="382"/>
    </location>
</feature>
<feature type="helix" evidence="5">
    <location>
        <begin position="383"/>
        <end position="393"/>
    </location>
</feature>
<feature type="strand" evidence="5">
    <location>
        <begin position="396"/>
        <end position="401"/>
    </location>
</feature>
<feature type="strand" evidence="5">
    <location>
        <begin position="404"/>
        <end position="409"/>
    </location>
</feature>
<feature type="helix" evidence="5">
    <location>
        <begin position="410"/>
        <end position="418"/>
    </location>
</feature>
<feature type="strand" evidence="5">
    <location>
        <begin position="425"/>
        <end position="427"/>
    </location>
</feature>
<keyword id="KW-0002">3D-structure</keyword>
<keyword id="KW-0998">Cell outer membrane</keyword>
<keyword id="KW-0178">Competence</keyword>
<keyword id="KW-0472">Membrane</keyword>
<keyword id="KW-0653">Protein transport</keyword>
<keyword id="KW-0732">Signal</keyword>
<keyword id="KW-0813">Transport</keyword>